<sequence length="819" mass="92545">MPAGICGCCGALRPRYKRLVDNIFPEDPRDGLVKADMEKLTFYAVSAPEKLDRIGAYLAERLSRDVMRHRYGNVFIAMEALDQLLMACHSQSIKPFVESFLHMVAKLLESGEPKLQIYGTNSFVKFANIEEDTPSYHRRYDFFVSRFSAMCHSCHDDPEVRKEIRIAGIRGIQGVVRKTVNDELRATIWEPQHMDKIVPSLLFNMQKIEDTDSRTGPPASPTTGDKEENPGILAENCFRELLGRATYGNMNNAVKPVFAHLDHHKLWESNEFAVSCFKIIMYSIQAQYSHHVIQQILVHLDLHKKDSPRIRAGIVQVLLEAVAIAAKGSIGPTVLEVFNTLLKHLTLSVDFELGDRRSSAGSAVFSSSSTRESDERIVQNAIIQTIGFFGSNLPDYQRSEIMMFIMGKVPVFGSSPHMLDTSQLGDMGTKRIQIMLLRSLLMVTSGYKAKTIAAALPPAFLDPLLSPSLMEDCELRQLVLEILHNLIDRHDNRAKLRGIRIIPDVADLKIKREKISKQDVNFMKKHGQQLYRHIYLGCKEDDNVHKNYELLYTTLALVTIELANEEVVIDLIRVAIALQDIAITNEDNLQMFNRCGIMGMVAAYLNFLSQMIAVPAFCQHVSKVIETRNMDATYFLPEVIFRDKCSLPKSLDKHEKNQIFLTNKIAESLGGSGYNVEKLSMPYVPQVTDEDRLSRRKSIVDTISIQVDILSGSNTEDKVNTEEITFESLKKAIDNTGMEEQEKEKRRLVIEKFQKAPFEEIAAQCESKANLLHDKLAQILELTIRPPPSPSGTLTMTAGHAQYQSVPVYEMKFPDLCVY</sequence>
<evidence type="ECO:0000250" key="1">
    <source>
        <dbReference type="UniProtKB" id="Q14156"/>
    </source>
</evidence>
<evidence type="ECO:0000256" key="2">
    <source>
        <dbReference type="SAM" id="MobiDB-lite"/>
    </source>
</evidence>
<evidence type="ECO:0000305" key="3"/>
<comment type="function">
    <text evidence="1">Component of a complex required to localize phosphatidylinositol 4-kinase (PI4K) to the plasma membrane. The complex acts as a regulator of phosphatidylinositol 4-phosphate (PtdIns(4)P) synthesis. In the complex, efr3a probably acts as the membrane-anchoring component.</text>
</comment>
<comment type="subunit">
    <text evidence="1">Component of a phosphatidylinositol 4-kinase (PI4K) complex.</text>
</comment>
<comment type="subcellular location">
    <subcellularLocation>
        <location evidence="1">Cell membrane</location>
        <topology evidence="1">Lipid-anchor</topology>
    </subcellularLocation>
    <text evidence="1">Palmitoylation anchors the protein to the plasma membrane.</text>
</comment>
<comment type="PTM">
    <text evidence="1">Palmitoylated at its N-terminus, anchoring the protein to the plasma membrane.</text>
</comment>
<comment type="similarity">
    <text evidence="3">Belongs to the EFR3 family.</text>
</comment>
<reference key="1">
    <citation type="submission" date="2004-09" db="EMBL/GenBank/DDBJ databases">
        <authorList>
            <consortium name="NIH - Xenopus Gene Collection (XGC) project"/>
        </authorList>
    </citation>
    <scope>NUCLEOTIDE SEQUENCE [LARGE SCALE MRNA]</scope>
    <source>
        <tissue>Oocyte</tissue>
    </source>
</reference>
<protein>
    <recommendedName>
        <fullName evidence="3">Protein EFR3 homolog A</fullName>
    </recommendedName>
    <alternativeName>
        <fullName>Protein EFR3-like</fullName>
    </alternativeName>
</protein>
<gene>
    <name type="primary">efr3a</name>
</gene>
<accession>Q641A2</accession>
<organism>
    <name type="scientific">Xenopus laevis</name>
    <name type="common">African clawed frog</name>
    <dbReference type="NCBI Taxonomy" id="8355"/>
    <lineage>
        <taxon>Eukaryota</taxon>
        <taxon>Metazoa</taxon>
        <taxon>Chordata</taxon>
        <taxon>Craniata</taxon>
        <taxon>Vertebrata</taxon>
        <taxon>Euteleostomi</taxon>
        <taxon>Amphibia</taxon>
        <taxon>Batrachia</taxon>
        <taxon>Anura</taxon>
        <taxon>Pipoidea</taxon>
        <taxon>Pipidae</taxon>
        <taxon>Xenopodinae</taxon>
        <taxon>Xenopus</taxon>
        <taxon>Xenopus</taxon>
    </lineage>
</organism>
<proteinExistence type="evidence at transcript level"/>
<dbReference type="EMBL" id="BC082437">
    <property type="protein sequence ID" value="AAH82437.1"/>
    <property type="molecule type" value="mRNA"/>
</dbReference>
<dbReference type="RefSeq" id="NP_001087891.1">
    <property type="nucleotide sequence ID" value="NM_001094422.1"/>
</dbReference>
<dbReference type="DNASU" id="447752"/>
<dbReference type="GeneID" id="447752"/>
<dbReference type="KEGG" id="xla:447752"/>
<dbReference type="AGR" id="Xenbase:XB-GENE-865807"/>
<dbReference type="CTD" id="447752"/>
<dbReference type="Xenbase" id="XB-GENE-865807">
    <property type="gene designation" value="efr3a.L"/>
</dbReference>
<dbReference type="OrthoDB" id="19232at2759"/>
<dbReference type="Proteomes" id="UP000186698">
    <property type="component" value="Chromosome 6L"/>
</dbReference>
<dbReference type="Bgee" id="447752">
    <property type="expression patterns" value="Expressed in egg cell and 19 other cell types or tissues"/>
</dbReference>
<dbReference type="GO" id="GO:0005886">
    <property type="term" value="C:plasma membrane"/>
    <property type="evidence" value="ECO:0000250"/>
    <property type="project" value="UniProtKB"/>
</dbReference>
<dbReference type="GO" id="GO:0072659">
    <property type="term" value="P:protein localization to plasma membrane"/>
    <property type="evidence" value="ECO:0000250"/>
    <property type="project" value="UniProtKB"/>
</dbReference>
<dbReference type="FunFam" id="1.25.10.10:FF:000347">
    <property type="entry name" value="EFR3 homolog A (S. cerevisiae)"/>
    <property type="match status" value="1"/>
</dbReference>
<dbReference type="Gene3D" id="1.25.10.10">
    <property type="entry name" value="Leucine-rich Repeat Variant"/>
    <property type="match status" value="1"/>
</dbReference>
<dbReference type="InterPro" id="IPR011989">
    <property type="entry name" value="ARM-like"/>
</dbReference>
<dbReference type="InterPro" id="IPR016024">
    <property type="entry name" value="ARM-type_fold"/>
</dbReference>
<dbReference type="InterPro" id="IPR049152">
    <property type="entry name" value="EFR3-like_ARM"/>
</dbReference>
<dbReference type="InterPro" id="IPR051851">
    <property type="entry name" value="EFR3_Homologs"/>
</dbReference>
<dbReference type="PANTHER" id="PTHR12444:SF1">
    <property type="entry name" value="PROTEIN EFR3 HOMOLOG A"/>
    <property type="match status" value="1"/>
</dbReference>
<dbReference type="PANTHER" id="PTHR12444">
    <property type="entry name" value="PROTEIN EFR3 HOMOLOG CMP44E"/>
    <property type="match status" value="1"/>
</dbReference>
<dbReference type="Pfam" id="PF21052">
    <property type="entry name" value="EFR3_ARM"/>
    <property type="match status" value="1"/>
</dbReference>
<dbReference type="SUPFAM" id="SSF48371">
    <property type="entry name" value="ARM repeat"/>
    <property type="match status" value="1"/>
</dbReference>
<name>EFR3A_XENLA</name>
<keyword id="KW-1003">Cell membrane</keyword>
<keyword id="KW-0449">Lipoprotein</keyword>
<keyword id="KW-0472">Membrane</keyword>
<keyword id="KW-0564">Palmitate</keyword>
<keyword id="KW-1185">Reference proteome</keyword>
<feature type="chain" id="PRO_0000270767" description="Protein EFR3 homolog A">
    <location>
        <begin position="1"/>
        <end position="819"/>
    </location>
</feature>
<feature type="region of interest" description="Disordered" evidence="2">
    <location>
        <begin position="210"/>
        <end position="230"/>
    </location>
</feature>